<sequence>MSLMLEPNPTQIKEERIYAEMGLTDEEFAMVERILGRLPNYTETGLFSVMWSEHCSYKNSKPVLRKFPTTGERVLQGPGEGAGIVDIGDNQAVVFKMESHNHPSAIEPYQGAATGVGGIIRDVFSMGARPVALLNSLRFGELQSPRVKYLFEEVVAGIAGYGNCIGIPTVGGEVQFDPCYEGNPLVNAMCVGLINHEDIKKGQAHGAGNTVMYVGASTGRDGIHGATFASEELSESSEAKRPAVQVGDPFMEKLLIEACLELIQSDALVGIQDMGAAGLTSSSAEMASKAGMGIEMYLDDVPQRETGMTPYEMMLSESQERMLIVVKKGREQEIVDLFEKYGLAAVTMGKVTEDKMLRLFHKGEKVAEVPADALAEEAPIYHKPSKEAAYFAEFQAMKMETPKVENYKEALFALLQQPTIASKEWVYDQYDYQVRTSTVVTPGSDAAVVRVRGTEKGLAMTTDCNSRYIYLDPEMGGKIAVAEAARNIVCSGGEPLAITDCLNFGNPEKPEIFWQIEKSVDGMSEACRTLQTPVIGGNVSMYNERSGEAVYPTPTVGMVGLVHDLKHVTTQEFKQAGDLVYVIGETKAEFGGSELQKMIHGKIFGQSPSIDLDVELKRQKQVLEAIQAGLVQSAHDVAEGGLAVAISESAIGAKGLGATVKLDGEATAALFAESQSRFVITVKRENKEAFEKAVEAIQVGEVTSTNEVTIHNEENEVLLTANVDEMRKAWKGAIPCLLK</sequence>
<dbReference type="EC" id="6.3.5.3" evidence="1"/>
<dbReference type="EMBL" id="CP001186">
    <property type="protein sequence ID" value="ACK93489.1"/>
    <property type="molecule type" value="Genomic_DNA"/>
</dbReference>
<dbReference type="RefSeq" id="WP_000055594.1">
    <property type="nucleotide sequence ID" value="NC_011772.1"/>
</dbReference>
<dbReference type="SMR" id="B7IUV3"/>
<dbReference type="KEGG" id="bcg:BCG9842_B4980"/>
<dbReference type="HOGENOM" id="CLU_003100_0_1_9"/>
<dbReference type="UniPathway" id="UPA00074">
    <property type="reaction ID" value="UER00128"/>
</dbReference>
<dbReference type="Proteomes" id="UP000006744">
    <property type="component" value="Chromosome"/>
</dbReference>
<dbReference type="GO" id="GO:0005737">
    <property type="term" value="C:cytoplasm"/>
    <property type="evidence" value="ECO:0007669"/>
    <property type="project" value="UniProtKB-SubCell"/>
</dbReference>
<dbReference type="GO" id="GO:0005524">
    <property type="term" value="F:ATP binding"/>
    <property type="evidence" value="ECO:0007669"/>
    <property type="project" value="UniProtKB-UniRule"/>
</dbReference>
<dbReference type="GO" id="GO:0000287">
    <property type="term" value="F:magnesium ion binding"/>
    <property type="evidence" value="ECO:0007669"/>
    <property type="project" value="UniProtKB-UniRule"/>
</dbReference>
<dbReference type="GO" id="GO:0004642">
    <property type="term" value="F:phosphoribosylformylglycinamidine synthase activity"/>
    <property type="evidence" value="ECO:0007669"/>
    <property type="project" value="UniProtKB-UniRule"/>
</dbReference>
<dbReference type="GO" id="GO:0006189">
    <property type="term" value="P:'de novo' IMP biosynthetic process"/>
    <property type="evidence" value="ECO:0007669"/>
    <property type="project" value="UniProtKB-UniRule"/>
</dbReference>
<dbReference type="CDD" id="cd02203">
    <property type="entry name" value="PurL_repeat1"/>
    <property type="match status" value="1"/>
</dbReference>
<dbReference type="CDD" id="cd02204">
    <property type="entry name" value="PurL_repeat2"/>
    <property type="match status" value="1"/>
</dbReference>
<dbReference type="FunFam" id="3.30.1330.10:FF:000004">
    <property type="entry name" value="Phosphoribosylformylglycinamidine synthase subunit PurL"/>
    <property type="match status" value="1"/>
</dbReference>
<dbReference type="FunFam" id="3.30.1330.10:FF:000011">
    <property type="entry name" value="Phosphoribosylformylglycinamidine synthase subunit PurL"/>
    <property type="match status" value="1"/>
</dbReference>
<dbReference type="FunFam" id="3.90.650.10:FF:000009">
    <property type="entry name" value="Phosphoribosylformylglycinamidine synthase subunit PurL"/>
    <property type="match status" value="1"/>
</dbReference>
<dbReference type="FunFam" id="3.90.650.10:FF:000013">
    <property type="entry name" value="Phosphoribosylformylglycinamidine synthase subunit PurL"/>
    <property type="match status" value="1"/>
</dbReference>
<dbReference type="Gene3D" id="3.90.650.10">
    <property type="entry name" value="PurM-like C-terminal domain"/>
    <property type="match status" value="2"/>
</dbReference>
<dbReference type="Gene3D" id="3.30.1330.10">
    <property type="entry name" value="PurM-like, N-terminal domain"/>
    <property type="match status" value="2"/>
</dbReference>
<dbReference type="HAMAP" id="MF_00420">
    <property type="entry name" value="PurL_2"/>
    <property type="match status" value="1"/>
</dbReference>
<dbReference type="InterPro" id="IPR010074">
    <property type="entry name" value="PRibForGlyAmidine_synth_PurL"/>
</dbReference>
<dbReference type="InterPro" id="IPR041609">
    <property type="entry name" value="PurL_linker"/>
</dbReference>
<dbReference type="InterPro" id="IPR010918">
    <property type="entry name" value="PurM-like_C_dom"/>
</dbReference>
<dbReference type="InterPro" id="IPR036676">
    <property type="entry name" value="PurM-like_C_sf"/>
</dbReference>
<dbReference type="InterPro" id="IPR016188">
    <property type="entry name" value="PurM-like_N"/>
</dbReference>
<dbReference type="InterPro" id="IPR036921">
    <property type="entry name" value="PurM-like_N_sf"/>
</dbReference>
<dbReference type="NCBIfam" id="TIGR01736">
    <property type="entry name" value="FGAM_synth_II"/>
    <property type="match status" value="1"/>
</dbReference>
<dbReference type="NCBIfam" id="NF002290">
    <property type="entry name" value="PRK01213.1"/>
    <property type="match status" value="1"/>
</dbReference>
<dbReference type="PANTHER" id="PTHR43555">
    <property type="entry name" value="PHOSPHORIBOSYLFORMYLGLYCINAMIDINE SYNTHASE SUBUNIT PURL"/>
    <property type="match status" value="1"/>
</dbReference>
<dbReference type="PANTHER" id="PTHR43555:SF1">
    <property type="entry name" value="PHOSPHORIBOSYLFORMYLGLYCINAMIDINE SYNTHASE SUBUNIT PURL"/>
    <property type="match status" value="1"/>
</dbReference>
<dbReference type="Pfam" id="PF00586">
    <property type="entry name" value="AIRS"/>
    <property type="match status" value="2"/>
</dbReference>
<dbReference type="Pfam" id="PF02769">
    <property type="entry name" value="AIRS_C"/>
    <property type="match status" value="2"/>
</dbReference>
<dbReference type="Pfam" id="PF18072">
    <property type="entry name" value="FGAR-AT_linker"/>
    <property type="match status" value="1"/>
</dbReference>
<dbReference type="PIRSF" id="PIRSF001587">
    <property type="entry name" value="FGAM_synthase_II"/>
    <property type="match status" value="1"/>
</dbReference>
<dbReference type="SUPFAM" id="SSF56042">
    <property type="entry name" value="PurM C-terminal domain-like"/>
    <property type="match status" value="2"/>
</dbReference>
<dbReference type="SUPFAM" id="SSF55326">
    <property type="entry name" value="PurM N-terminal domain-like"/>
    <property type="match status" value="2"/>
</dbReference>
<protein>
    <recommendedName>
        <fullName evidence="1">Phosphoribosylformylglycinamidine synthase subunit PurL</fullName>
        <shortName evidence="1">FGAM synthase</shortName>
        <ecNumber evidence="1">6.3.5.3</ecNumber>
    </recommendedName>
    <alternativeName>
        <fullName evidence="1">Formylglycinamide ribonucleotide amidotransferase subunit II</fullName>
        <shortName evidence="1">FGAR amidotransferase II</shortName>
        <shortName evidence="1">FGAR-AT II</shortName>
    </alternativeName>
    <alternativeName>
        <fullName evidence="1">Glutamine amidotransferase PurL</fullName>
    </alternativeName>
    <alternativeName>
        <fullName evidence="1">Phosphoribosylformylglycinamidine synthase subunit II</fullName>
    </alternativeName>
</protein>
<keyword id="KW-0067">ATP-binding</keyword>
<keyword id="KW-0963">Cytoplasm</keyword>
<keyword id="KW-0436">Ligase</keyword>
<keyword id="KW-0460">Magnesium</keyword>
<keyword id="KW-0479">Metal-binding</keyword>
<keyword id="KW-0547">Nucleotide-binding</keyword>
<keyword id="KW-0658">Purine biosynthesis</keyword>
<feature type="chain" id="PRO_1000194821" description="Phosphoribosylformylglycinamidine synthase subunit PurL">
    <location>
        <begin position="1"/>
        <end position="739"/>
    </location>
</feature>
<feature type="active site" evidence="1">
    <location>
        <position position="54"/>
    </location>
</feature>
<feature type="active site" description="Proton acceptor" evidence="1">
    <location>
        <position position="100"/>
    </location>
</feature>
<feature type="binding site" evidence="1">
    <location>
        <position position="57"/>
    </location>
    <ligand>
        <name>ATP</name>
        <dbReference type="ChEBI" id="CHEBI:30616"/>
    </ligand>
</feature>
<feature type="binding site" evidence="1">
    <location>
        <position position="96"/>
    </location>
    <ligand>
        <name>ATP</name>
        <dbReference type="ChEBI" id="CHEBI:30616"/>
    </ligand>
</feature>
<feature type="binding site" evidence="1">
    <location>
        <position position="98"/>
    </location>
    <ligand>
        <name>Mg(2+)</name>
        <dbReference type="ChEBI" id="CHEBI:18420"/>
        <label>1</label>
    </ligand>
</feature>
<feature type="binding site" evidence="1">
    <location>
        <begin position="99"/>
        <end position="102"/>
    </location>
    <ligand>
        <name>substrate</name>
    </ligand>
</feature>
<feature type="binding site" evidence="1">
    <location>
        <position position="121"/>
    </location>
    <ligand>
        <name>substrate</name>
    </ligand>
</feature>
<feature type="binding site" evidence="1">
    <location>
        <position position="122"/>
    </location>
    <ligand>
        <name>Mg(2+)</name>
        <dbReference type="ChEBI" id="CHEBI:18420"/>
        <label>2</label>
    </ligand>
</feature>
<feature type="binding site" evidence="1">
    <location>
        <position position="245"/>
    </location>
    <ligand>
        <name>substrate</name>
    </ligand>
</feature>
<feature type="binding site" evidence="1">
    <location>
        <position position="273"/>
    </location>
    <ligand>
        <name>Mg(2+)</name>
        <dbReference type="ChEBI" id="CHEBI:18420"/>
        <label>2</label>
    </ligand>
</feature>
<feature type="binding site" evidence="1">
    <location>
        <begin position="317"/>
        <end position="319"/>
    </location>
    <ligand>
        <name>substrate</name>
    </ligand>
</feature>
<feature type="binding site" evidence="1">
    <location>
        <position position="500"/>
    </location>
    <ligand>
        <name>ATP</name>
        <dbReference type="ChEBI" id="CHEBI:30616"/>
    </ligand>
</feature>
<feature type="binding site" evidence="1">
    <location>
        <position position="537"/>
    </location>
    <ligand>
        <name>ATP</name>
        <dbReference type="ChEBI" id="CHEBI:30616"/>
    </ligand>
</feature>
<feature type="binding site" evidence="1">
    <location>
        <position position="538"/>
    </location>
    <ligand>
        <name>Mg(2+)</name>
        <dbReference type="ChEBI" id="CHEBI:18420"/>
        <label>1</label>
    </ligand>
</feature>
<feature type="binding site" evidence="1">
    <location>
        <position position="540"/>
    </location>
    <ligand>
        <name>substrate</name>
    </ligand>
</feature>
<gene>
    <name evidence="1" type="primary">purL</name>
    <name type="ordered locus">BCG9842_B4980</name>
</gene>
<reference key="1">
    <citation type="submission" date="2008-10" db="EMBL/GenBank/DDBJ databases">
        <title>Genome sequence of Bacillus cereus G9842.</title>
        <authorList>
            <person name="Dodson R.J."/>
            <person name="Durkin A.S."/>
            <person name="Rosovitz M.J."/>
            <person name="Rasko D.A."/>
            <person name="Hoffmaster A."/>
            <person name="Ravel J."/>
            <person name="Sutton G."/>
        </authorList>
    </citation>
    <scope>NUCLEOTIDE SEQUENCE [LARGE SCALE GENOMIC DNA]</scope>
    <source>
        <strain>G9842</strain>
    </source>
</reference>
<accession>B7IUV3</accession>
<comment type="function">
    <text evidence="1">Part of the phosphoribosylformylglycinamidine synthase complex involved in the purines biosynthetic pathway. Catalyzes the ATP-dependent conversion of formylglycinamide ribonucleotide (FGAR) and glutamine to yield formylglycinamidine ribonucleotide (FGAM) and glutamate. The FGAM synthase complex is composed of three subunits. PurQ produces an ammonia molecule by converting glutamine to glutamate. PurL transfers the ammonia molecule to FGAR to form FGAM in an ATP-dependent manner. PurS interacts with PurQ and PurL and is thought to assist in the transfer of the ammonia molecule from PurQ to PurL.</text>
</comment>
<comment type="catalytic activity">
    <reaction evidence="1">
        <text>N(2)-formyl-N(1)-(5-phospho-beta-D-ribosyl)glycinamide + L-glutamine + ATP + H2O = 2-formamido-N(1)-(5-O-phospho-beta-D-ribosyl)acetamidine + L-glutamate + ADP + phosphate + H(+)</text>
        <dbReference type="Rhea" id="RHEA:17129"/>
        <dbReference type="ChEBI" id="CHEBI:15377"/>
        <dbReference type="ChEBI" id="CHEBI:15378"/>
        <dbReference type="ChEBI" id="CHEBI:29985"/>
        <dbReference type="ChEBI" id="CHEBI:30616"/>
        <dbReference type="ChEBI" id="CHEBI:43474"/>
        <dbReference type="ChEBI" id="CHEBI:58359"/>
        <dbReference type="ChEBI" id="CHEBI:147286"/>
        <dbReference type="ChEBI" id="CHEBI:147287"/>
        <dbReference type="ChEBI" id="CHEBI:456216"/>
        <dbReference type="EC" id="6.3.5.3"/>
    </reaction>
</comment>
<comment type="pathway">
    <text evidence="1">Purine metabolism; IMP biosynthesis via de novo pathway; 5-amino-1-(5-phospho-D-ribosyl)imidazole from N(2)-formyl-N(1)-(5-phospho-D-ribosyl)glycinamide: step 1/2.</text>
</comment>
<comment type="subunit">
    <text evidence="1">Monomer. Part of the FGAM synthase complex composed of 1 PurL, 1 PurQ and 2 PurS subunits.</text>
</comment>
<comment type="subcellular location">
    <subcellularLocation>
        <location evidence="1">Cytoplasm</location>
    </subcellularLocation>
</comment>
<comment type="similarity">
    <text evidence="1">Belongs to the FGAMS family.</text>
</comment>
<name>PURL_BACC2</name>
<evidence type="ECO:0000255" key="1">
    <source>
        <dbReference type="HAMAP-Rule" id="MF_00420"/>
    </source>
</evidence>
<proteinExistence type="inferred from homology"/>
<organism>
    <name type="scientific">Bacillus cereus (strain G9842)</name>
    <dbReference type="NCBI Taxonomy" id="405531"/>
    <lineage>
        <taxon>Bacteria</taxon>
        <taxon>Bacillati</taxon>
        <taxon>Bacillota</taxon>
        <taxon>Bacilli</taxon>
        <taxon>Bacillales</taxon>
        <taxon>Bacillaceae</taxon>
        <taxon>Bacillus</taxon>
        <taxon>Bacillus cereus group</taxon>
    </lineage>
</organism>